<comment type="function">
    <text evidence="2 5">Probable transcription activator for a number of lung-specific genes (PubMed:9676429). Mediates up-regulation of the E3 ligase IRF2BPL and drives ubiquitination and degradation of CTNNB1 (By similarity).</text>
</comment>
<comment type="subunit">
    <text evidence="2">Interacts with the transcription factors TBP and TFIIB.</text>
</comment>
<comment type="subcellular location">
    <subcellularLocation>
        <location evidence="2">Nucleus</location>
    </subcellularLocation>
</comment>
<comment type="tissue specificity">
    <text evidence="5">Uniquely expressed in the bronchiolar epithelium and in type II pneumocytes.</text>
</comment>
<comment type="domain">
    <text evidence="1">Two activation domains, AD1 and AD2, C-terminal of (and distinct from) the forkhead domains are necessary for transcriptional activation.</text>
</comment>
<organism>
    <name type="scientific">Mus musculus</name>
    <name type="common">Mouse</name>
    <dbReference type="NCBI Taxonomy" id="10090"/>
    <lineage>
        <taxon>Eukaryota</taxon>
        <taxon>Metazoa</taxon>
        <taxon>Chordata</taxon>
        <taxon>Craniata</taxon>
        <taxon>Vertebrata</taxon>
        <taxon>Euteleostomi</taxon>
        <taxon>Mammalia</taxon>
        <taxon>Eutheria</taxon>
        <taxon>Euarchontoglires</taxon>
        <taxon>Glires</taxon>
        <taxon>Rodentia</taxon>
        <taxon>Myomorpha</taxon>
        <taxon>Muroidea</taxon>
        <taxon>Muridae</taxon>
        <taxon>Murinae</taxon>
        <taxon>Mus</taxon>
        <taxon>Mus</taxon>
    </lineage>
</organism>
<gene>
    <name type="primary">Foxf2</name>
    <name type="synonym">Lun</name>
</gene>
<protein>
    <recommendedName>
        <fullName>Forkhead box protein F2</fullName>
    </recommendedName>
    <alternativeName>
        <fullName>Protein LUN</fullName>
    </alternativeName>
</protein>
<accession>O54743</accession>
<accession>B2RQI5</accession>
<accession>Q3V1L3</accession>
<accession>Q78DW1</accession>
<evidence type="ECO:0000250" key="1"/>
<evidence type="ECO:0000250" key="2">
    <source>
        <dbReference type="UniProtKB" id="Q12947"/>
    </source>
</evidence>
<evidence type="ECO:0000255" key="3">
    <source>
        <dbReference type="PROSITE-ProRule" id="PRU00089"/>
    </source>
</evidence>
<evidence type="ECO:0000256" key="4">
    <source>
        <dbReference type="SAM" id="MobiDB-lite"/>
    </source>
</evidence>
<evidence type="ECO:0000269" key="5">
    <source>
    </source>
</evidence>
<evidence type="ECO:0000305" key="6"/>
<name>FOXF2_MOUSE</name>
<proteinExistence type="evidence at transcript level"/>
<reference key="1">
    <citation type="journal article" date="1998" name="Genomics">
        <title>Mouse forkhead (winged helix) gene LUN encodes a transactivator that acts in the lung.</title>
        <authorList>
            <person name="Miura N."/>
            <person name="Kakinuma H."/>
            <person name="Sato M."/>
            <person name="Aiba N."/>
            <person name="Terada K."/>
            <person name="Sugiyama T."/>
        </authorList>
    </citation>
    <scope>NUCLEOTIDE SEQUENCE [GENOMIC DNA]</scope>
    <scope>NUCLEOTIDE SEQUENCE [MRNA] OF 11-446</scope>
    <scope>FUNCTION</scope>
    <scope>TISSUE SPECIFICITY</scope>
</reference>
<reference key="2">
    <citation type="journal article" date="2005" name="Science">
        <title>The transcriptional landscape of the mammalian genome.</title>
        <authorList>
            <person name="Carninci P."/>
            <person name="Kasukawa T."/>
            <person name="Katayama S."/>
            <person name="Gough J."/>
            <person name="Frith M.C."/>
            <person name="Maeda N."/>
            <person name="Oyama R."/>
            <person name="Ravasi T."/>
            <person name="Lenhard B."/>
            <person name="Wells C."/>
            <person name="Kodzius R."/>
            <person name="Shimokawa K."/>
            <person name="Bajic V.B."/>
            <person name="Brenner S.E."/>
            <person name="Batalov S."/>
            <person name="Forrest A.R."/>
            <person name="Zavolan M."/>
            <person name="Davis M.J."/>
            <person name="Wilming L.G."/>
            <person name="Aidinis V."/>
            <person name="Allen J.E."/>
            <person name="Ambesi-Impiombato A."/>
            <person name="Apweiler R."/>
            <person name="Aturaliya R.N."/>
            <person name="Bailey T.L."/>
            <person name="Bansal M."/>
            <person name="Baxter L."/>
            <person name="Beisel K.W."/>
            <person name="Bersano T."/>
            <person name="Bono H."/>
            <person name="Chalk A.M."/>
            <person name="Chiu K.P."/>
            <person name="Choudhary V."/>
            <person name="Christoffels A."/>
            <person name="Clutterbuck D.R."/>
            <person name="Crowe M.L."/>
            <person name="Dalla E."/>
            <person name="Dalrymple B.P."/>
            <person name="de Bono B."/>
            <person name="Della Gatta G."/>
            <person name="di Bernardo D."/>
            <person name="Down T."/>
            <person name="Engstrom P."/>
            <person name="Fagiolini M."/>
            <person name="Faulkner G."/>
            <person name="Fletcher C.F."/>
            <person name="Fukushima T."/>
            <person name="Furuno M."/>
            <person name="Futaki S."/>
            <person name="Gariboldi M."/>
            <person name="Georgii-Hemming P."/>
            <person name="Gingeras T.R."/>
            <person name="Gojobori T."/>
            <person name="Green R.E."/>
            <person name="Gustincich S."/>
            <person name="Harbers M."/>
            <person name="Hayashi Y."/>
            <person name="Hensch T.K."/>
            <person name="Hirokawa N."/>
            <person name="Hill D."/>
            <person name="Huminiecki L."/>
            <person name="Iacono M."/>
            <person name="Ikeo K."/>
            <person name="Iwama A."/>
            <person name="Ishikawa T."/>
            <person name="Jakt M."/>
            <person name="Kanapin A."/>
            <person name="Katoh M."/>
            <person name="Kawasawa Y."/>
            <person name="Kelso J."/>
            <person name="Kitamura H."/>
            <person name="Kitano H."/>
            <person name="Kollias G."/>
            <person name="Krishnan S.P."/>
            <person name="Kruger A."/>
            <person name="Kummerfeld S.K."/>
            <person name="Kurochkin I.V."/>
            <person name="Lareau L.F."/>
            <person name="Lazarevic D."/>
            <person name="Lipovich L."/>
            <person name="Liu J."/>
            <person name="Liuni S."/>
            <person name="McWilliam S."/>
            <person name="Madan Babu M."/>
            <person name="Madera M."/>
            <person name="Marchionni L."/>
            <person name="Matsuda H."/>
            <person name="Matsuzawa S."/>
            <person name="Miki H."/>
            <person name="Mignone F."/>
            <person name="Miyake S."/>
            <person name="Morris K."/>
            <person name="Mottagui-Tabar S."/>
            <person name="Mulder N."/>
            <person name="Nakano N."/>
            <person name="Nakauchi H."/>
            <person name="Ng P."/>
            <person name="Nilsson R."/>
            <person name="Nishiguchi S."/>
            <person name="Nishikawa S."/>
            <person name="Nori F."/>
            <person name="Ohara O."/>
            <person name="Okazaki Y."/>
            <person name="Orlando V."/>
            <person name="Pang K.C."/>
            <person name="Pavan W.J."/>
            <person name="Pavesi G."/>
            <person name="Pesole G."/>
            <person name="Petrovsky N."/>
            <person name="Piazza S."/>
            <person name="Reed J."/>
            <person name="Reid J.F."/>
            <person name="Ring B.Z."/>
            <person name="Ringwald M."/>
            <person name="Rost B."/>
            <person name="Ruan Y."/>
            <person name="Salzberg S.L."/>
            <person name="Sandelin A."/>
            <person name="Schneider C."/>
            <person name="Schoenbach C."/>
            <person name="Sekiguchi K."/>
            <person name="Semple C.A."/>
            <person name="Seno S."/>
            <person name="Sessa L."/>
            <person name="Sheng Y."/>
            <person name="Shibata Y."/>
            <person name="Shimada H."/>
            <person name="Shimada K."/>
            <person name="Silva D."/>
            <person name="Sinclair B."/>
            <person name="Sperling S."/>
            <person name="Stupka E."/>
            <person name="Sugiura K."/>
            <person name="Sultana R."/>
            <person name="Takenaka Y."/>
            <person name="Taki K."/>
            <person name="Tammoja K."/>
            <person name="Tan S.L."/>
            <person name="Tang S."/>
            <person name="Taylor M.S."/>
            <person name="Tegner J."/>
            <person name="Teichmann S.A."/>
            <person name="Ueda H.R."/>
            <person name="van Nimwegen E."/>
            <person name="Verardo R."/>
            <person name="Wei C.L."/>
            <person name="Yagi K."/>
            <person name="Yamanishi H."/>
            <person name="Zabarovsky E."/>
            <person name="Zhu S."/>
            <person name="Zimmer A."/>
            <person name="Hide W."/>
            <person name="Bult C."/>
            <person name="Grimmond S.M."/>
            <person name="Teasdale R.D."/>
            <person name="Liu E.T."/>
            <person name="Brusic V."/>
            <person name="Quackenbush J."/>
            <person name="Wahlestedt C."/>
            <person name="Mattick J.S."/>
            <person name="Hume D.A."/>
            <person name="Kai C."/>
            <person name="Sasaki D."/>
            <person name="Tomaru Y."/>
            <person name="Fukuda S."/>
            <person name="Kanamori-Katayama M."/>
            <person name="Suzuki M."/>
            <person name="Aoki J."/>
            <person name="Arakawa T."/>
            <person name="Iida J."/>
            <person name="Imamura K."/>
            <person name="Itoh M."/>
            <person name="Kato T."/>
            <person name="Kawaji H."/>
            <person name="Kawagashira N."/>
            <person name="Kawashima T."/>
            <person name="Kojima M."/>
            <person name="Kondo S."/>
            <person name="Konno H."/>
            <person name="Nakano K."/>
            <person name="Ninomiya N."/>
            <person name="Nishio T."/>
            <person name="Okada M."/>
            <person name="Plessy C."/>
            <person name="Shibata K."/>
            <person name="Shiraki T."/>
            <person name="Suzuki S."/>
            <person name="Tagami M."/>
            <person name="Waki K."/>
            <person name="Watahiki A."/>
            <person name="Okamura-Oho Y."/>
            <person name="Suzuki H."/>
            <person name="Kawai J."/>
            <person name="Hayashizaki Y."/>
        </authorList>
    </citation>
    <scope>NUCLEOTIDE SEQUENCE [LARGE SCALE MRNA]</scope>
    <source>
        <strain>C57BL/6J</strain>
        <tissue>Head</tissue>
    </source>
</reference>
<reference key="3">
    <citation type="journal article" date="2004" name="Genome Res.">
        <title>The status, quality, and expansion of the NIH full-length cDNA project: the Mammalian Gene Collection (MGC).</title>
        <authorList>
            <consortium name="The MGC Project Team"/>
        </authorList>
    </citation>
    <scope>NUCLEOTIDE SEQUENCE [LARGE SCALE MRNA]</scope>
    <source>
        <tissue>Brain</tissue>
    </source>
</reference>
<dbReference type="EMBL" id="Y12293">
    <property type="protein sequence ID" value="CAA72972.1"/>
    <property type="molecule type" value="Genomic_DNA"/>
</dbReference>
<dbReference type="EMBL" id="Y12294">
    <property type="protein sequence ID" value="CAA72972.1"/>
    <property type="status" value="JOINED"/>
    <property type="molecule type" value="Genomic_DNA"/>
</dbReference>
<dbReference type="EMBL" id="Y11148">
    <property type="protein sequence ID" value="CAA72035.1"/>
    <property type="molecule type" value="mRNA"/>
</dbReference>
<dbReference type="EMBL" id="AK132385">
    <property type="protein sequence ID" value="BAE21137.1"/>
    <property type="molecule type" value="mRNA"/>
</dbReference>
<dbReference type="EMBL" id="BC137947">
    <property type="protein sequence ID" value="AAI37948.1"/>
    <property type="molecule type" value="mRNA"/>
</dbReference>
<dbReference type="EMBL" id="BC137949">
    <property type="protein sequence ID" value="AAI37950.1"/>
    <property type="molecule type" value="mRNA"/>
</dbReference>
<dbReference type="CCDS" id="CCDS26424.1"/>
<dbReference type="RefSeq" id="NP_034355.2">
    <property type="nucleotide sequence ID" value="NM_010225.3"/>
</dbReference>
<dbReference type="SMR" id="O54743"/>
<dbReference type="FunCoup" id="O54743">
    <property type="interactions" value="1137"/>
</dbReference>
<dbReference type="STRING" id="10090.ENSMUSP00000046789"/>
<dbReference type="PhosphoSitePlus" id="O54743"/>
<dbReference type="PaxDb" id="10090-ENSMUSP00000046789"/>
<dbReference type="PeptideAtlas" id="O54743"/>
<dbReference type="ProteomicsDB" id="271713"/>
<dbReference type="Antibodypedia" id="9203">
    <property type="antibodies" value="238 antibodies from 23 providers"/>
</dbReference>
<dbReference type="DNASU" id="14238"/>
<dbReference type="Ensembl" id="ENSMUST00000042054.3">
    <property type="protein sequence ID" value="ENSMUSP00000046789.3"/>
    <property type="gene ID" value="ENSMUSG00000038402.3"/>
</dbReference>
<dbReference type="GeneID" id="14238"/>
<dbReference type="KEGG" id="mmu:14238"/>
<dbReference type="UCSC" id="uc007pzo.2">
    <property type="organism name" value="mouse"/>
</dbReference>
<dbReference type="AGR" id="MGI:1347479"/>
<dbReference type="CTD" id="2295"/>
<dbReference type="MGI" id="MGI:1347479">
    <property type="gene designation" value="Foxf2"/>
</dbReference>
<dbReference type="VEuPathDB" id="HostDB:ENSMUSG00000038402"/>
<dbReference type="eggNOG" id="KOG2294">
    <property type="taxonomic scope" value="Eukaryota"/>
</dbReference>
<dbReference type="GeneTree" id="ENSGT00940000162527"/>
<dbReference type="HOGENOM" id="CLU_039845_0_0_1"/>
<dbReference type="InParanoid" id="O54743"/>
<dbReference type="OMA" id="HQNGRED"/>
<dbReference type="OrthoDB" id="5954824at2759"/>
<dbReference type="PhylomeDB" id="O54743"/>
<dbReference type="TreeFam" id="TF351598"/>
<dbReference type="BioGRID-ORCS" id="14238">
    <property type="hits" value="2 hits in 81 CRISPR screens"/>
</dbReference>
<dbReference type="ChiTaRS" id="Topors">
    <property type="organism name" value="mouse"/>
</dbReference>
<dbReference type="PRO" id="PR:O54743"/>
<dbReference type="Proteomes" id="UP000000589">
    <property type="component" value="Chromosome 13"/>
</dbReference>
<dbReference type="RNAct" id="O54743">
    <property type="molecule type" value="protein"/>
</dbReference>
<dbReference type="Bgee" id="ENSMUSG00000038402">
    <property type="expression patterns" value="Expressed in brain blood vessel and 194 other cell types or tissues"/>
</dbReference>
<dbReference type="GO" id="GO:0016604">
    <property type="term" value="C:nuclear body"/>
    <property type="evidence" value="ECO:0007669"/>
    <property type="project" value="Ensembl"/>
</dbReference>
<dbReference type="GO" id="GO:0005634">
    <property type="term" value="C:nucleus"/>
    <property type="evidence" value="ECO:0000314"/>
    <property type="project" value="MGI"/>
</dbReference>
<dbReference type="GO" id="GO:0005667">
    <property type="term" value="C:transcription regulator complex"/>
    <property type="evidence" value="ECO:0007669"/>
    <property type="project" value="Ensembl"/>
</dbReference>
<dbReference type="GO" id="GO:0003677">
    <property type="term" value="F:DNA binding"/>
    <property type="evidence" value="ECO:0000314"/>
    <property type="project" value="MGI"/>
</dbReference>
<dbReference type="GO" id="GO:0001228">
    <property type="term" value="F:DNA-binding transcription activator activity, RNA polymerase II-specific"/>
    <property type="evidence" value="ECO:0007669"/>
    <property type="project" value="Ensembl"/>
</dbReference>
<dbReference type="GO" id="GO:0003700">
    <property type="term" value="F:DNA-binding transcription factor activity"/>
    <property type="evidence" value="ECO:0000314"/>
    <property type="project" value="MGI"/>
</dbReference>
<dbReference type="GO" id="GO:0000977">
    <property type="term" value="F:RNA polymerase II transcription regulatory region sequence-specific DNA binding"/>
    <property type="evidence" value="ECO:0007669"/>
    <property type="project" value="Ensembl"/>
</dbReference>
<dbReference type="GO" id="GO:0001093">
    <property type="term" value="F:TFIIB-class transcription factor binding"/>
    <property type="evidence" value="ECO:0007669"/>
    <property type="project" value="Ensembl"/>
</dbReference>
<dbReference type="GO" id="GO:0048596">
    <property type="term" value="P:embryonic camera-type eye morphogenesis"/>
    <property type="evidence" value="ECO:0000315"/>
    <property type="project" value="BHF-UCL"/>
</dbReference>
<dbReference type="GO" id="GO:0048566">
    <property type="term" value="P:embryonic digestive tract development"/>
    <property type="evidence" value="ECO:0000316"/>
    <property type="project" value="MGI"/>
</dbReference>
<dbReference type="GO" id="GO:0042249">
    <property type="term" value="P:establishment of planar polarity of embryonic epithelium"/>
    <property type="evidence" value="ECO:0000315"/>
    <property type="project" value="MGI"/>
</dbReference>
<dbReference type="GO" id="GO:0030198">
    <property type="term" value="P:extracellular matrix organization"/>
    <property type="evidence" value="ECO:0000315"/>
    <property type="project" value="MGI"/>
</dbReference>
<dbReference type="GO" id="GO:0048806">
    <property type="term" value="P:genitalia development"/>
    <property type="evidence" value="ECO:0007669"/>
    <property type="project" value="Ensembl"/>
</dbReference>
<dbReference type="GO" id="GO:0045892">
    <property type="term" value="P:negative regulation of DNA-templated transcription"/>
    <property type="evidence" value="ECO:0000314"/>
    <property type="project" value="MGI"/>
</dbReference>
<dbReference type="GO" id="GO:0045944">
    <property type="term" value="P:positive regulation of transcription by RNA polymerase II"/>
    <property type="evidence" value="ECO:0000266"/>
    <property type="project" value="MGI"/>
</dbReference>
<dbReference type="GO" id="GO:0032434">
    <property type="term" value="P:regulation of proteasomal ubiquitin-dependent protein catabolic process"/>
    <property type="evidence" value="ECO:0007669"/>
    <property type="project" value="Ensembl"/>
</dbReference>
<dbReference type="GO" id="GO:1902914">
    <property type="term" value="P:regulation of protein polyubiquitination"/>
    <property type="evidence" value="ECO:0007669"/>
    <property type="project" value="Ensembl"/>
</dbReference>
<dbReference type="GO" id="GO:0060021">
    <property type="term" value="P:roof of mouth development"/>
    <property type="evidence" value="ECO:0007669"/>
    <property type="project" value="Ensembl"/>
</dbReference>
<dbReference type="FunFam" id="1.10.10.10:FF:000071">
    <property type="entry name" value="Forkhead box F1"/>
    <property type="match status" value="1"/>
</dbReference>
<dbReference type="Gene3D" id="1.10.10.10">
    <property type="entry name" value="Winged helix-like DNA-binding domain superfamily/Winged helix DNA-binding domain"/>
    <property type="match status" value="1"/>
</dbReference>
<dbReference type="InterPro" id="IPR001766">
    <property type="entry name" value="Fork_head_dom"/>
</dbReference>
<dbReference type="InterPro" id="IPR051770">
    <property type="entry name" value="Forkhead_box_regulator"/>
</dbReference>
<dbReference type="InterPro" id="IPR018122">
    <property type="entry name" value="TF_fork_head_CS_1"/>
</dbReference>
<dbReference type="InterPro" id="IPR030456">
    <property type="entry name" value="TF_fork_head_CS_2"/>
</dbReference>
<dbReference type="InterPro" id="IPR036388">
    <property type="entry name" value="WH-like_DNA-bd_sf"/>
</dbReference>
<dbReference type="InterPro" id="IPR036390">
    <property type="entry name" value="WH_DNA-bd_sf"/>
</dbReference>
<dbReference type="PANTHER" id="PTHR46262">
    <property type="entry name" value="FORKHEAD BOX PROTEIN BINIOU"/>
    <property type="match status" value="1"/>
</dbReference>
<dbReference type="PANTHER" id="PTHR46262:SF3">
    <property type="entry name" value="FORKHEAD BOX PROTEIN F2"/>
    <property type="match status" value="1"/>
</dbReference>
<dbReference type="Pfam" id="PF00250">
    <property type="entry name" value="Forkhead"/>
    <property type="match status" value="1"/>
</dbReference>
<dbReference type="PRINTS" id="PR00053">
    <property type="entry name" value="FORKHEAD"/>
</dbReference>
<dbReference type="SMART" id="SM00339">
    <property type="entry name" value="FH"/>
    <property type="match status" value="1"/>
</dbReference>
<dbReference type="SUPFAM" id="SSF46785">
    <property type="entry name" value="Winged helix' DNA-binding domain"/>
    <property type="match status" value="1"/>
</dbReference>
<dbReference type="PROSITE" id="PS00657">
    <property type="entry name" value="FORK_HEAD_1"/>
    <property type="match status" value="1"/>
</dbReference>
<dbReference type="PROSITE" id="PS00658">
    <property type="entry name" value="FORK_HEAD_2"/>
    <property type="match status" value="1"/>
</dbReference>
<dbReference type="PROSITE" id="PS50039">
    <property type="entry name" value="FORK_HEAD_3"/>
    <property type="match status" value="1"/>
</dbReference>
<feature type="chain" id="PRO_0000322981" description="Forkhead box protein F2">
    <location>
        <begin position="1"/>
        <end position="446"/>
    </location>
</feature>
<feature type="DNA-binding region" description="Fork-head" evidence="3">
    <location>
        <begin position="100"/>
        <end position="194"/>
    </location>
</feature>
<feature type="region of interest" description="Disordered" evidence="4">
    <location>
        <begin position="1"/>
        <end position="97"/>
    </location>
</feature>
<feature type="region of interest" description="Disordered" evidence="4">
    <location>
        <begin position="257"/>
        <end position="278"/>
    </location>
</feature>
<feature type="region of interest" description="Disordered" evidence="4">
    <location>
        <begin position="304"/>
        <end position="325"/>
    </location>
</feature>
<feature type="region of interest" description="Disordered" evidence="4">
    <location>
        <begin position="340"/>
        <end position="371"/>
    </location>
</feature>
<feature type="compositionally biased region" description="Pro residues" evidence="4">
    <location>
        <begin position="1"/>
        <end position="18"/>
    </location>
</feature>
<feature type="compositionally biased region" description="Low complexity" evidence="4">
    <location>
        <begin position="45"/>
        <end position="78"/>
    </location>
</feature>
<feature type="compositionally biased region" description="Basic residues" evidence="4">
    <location>
        <begin position="263"/>
        <end position="274"/>
    </location>
</feature>
<feature type="compositionally biased region" description="Low complexity" evidence="4">
    <location>
        <begin position="311"/>
        <end position="325"/>
    </location>
</feature>
<feature type="sequence conflict" description="In Ref. 1; CAA72972/CAA72035." evidence="6" ref="1">
    <original>H</original>
    <variation>Q</variation>
    <location>
        <position position="266"/>
    </location>
</feature>
<keyword id="KW-0010">Activator</keyword>
<keyword id="KW-0238">DNA-binding</keyword>
<keyword id="KW-0539">Nucleus</keyword>
<keyword id="KW-1185">Reference proteome</keyword>
<keyword id="KW-0804">Transcription</keyword>
<keyword id="KW-0805">Transcription regulation</keyword>
<sequence length="446" mass="46383">MSTEGGPPPPPPRPPPAPLRRACSPAPGALQAALMSPPPAATLESTSSSSSSSSASCASSSSNSVSASAGACKSAASSGGAGAGSGGTKKATSGLRRPEKPPYSYIALIVMAIQSSPSKRLTLSEIYQFLQARFPFFRGAYQGWKNSVRHNLSLNECFIKLPKGLGRPGKGHYWTIDPASEFMFEEGSFRRRPRGFRRKCQALKPMYHRVVSGLGFGASLLPQGFDFQAPPSAPLGCHGQGGYGGLDMMPAGYDTGAGAPGHAHPHHLHHHHVPHMSPNPGSTYMASCPVPAGPAGVGAAAGGGGGGGDYGPDSSSSPVPSSPAMASAIECHSPYTSPAAHWSSPGASPYLKQPPALTPSSNPAASAGLHPSMSSYSLEQSYLHQNAREDLSVGLPRYQHHSTPVCDRKDFVLNFNGISSFHPSASGSYYHHHHQSVCQDIKPCVM</sequence>